<name>SCR2D_ACRMI</name>
<reference key="1">
    <citation type="journal article" date="2009" name="PLoS ONE">
        <title>Identification and gene expression analysis of a taxonomically restricted cysteine-rich protein family in reef-building corals.</title>
        <authorList>
            <person name="Sunagawa S."/>
            <person name="DeSalvo M.K."/>
            <person name="Voolstra C.R."/>
            <person name="Reyes-Bermudez A."/>
            <person name="Medina M."/>
        </authorList>
    </citation>
    <scope>NUCLEOTIDE SEQUENCE [MRNA]</scope>
</reference>
<reference key="2">
    <citation type="journal article" date="2015" name="Mol. Biol. Evol.">
        <title>Evolution of an ancient venom: recognition of a novel family of cnidarian toxins and the common evolutionary origin of sodium and potassium neurotoxins in sea anemone.</title>
        <authorList>
            <person name="Jouiaei M."/>
            <person name="Sunagar K."/>
            <person name="Federman Gross A."/>
            <person name="Scheib H."/>
            <person name="Alewood P.F."/>
            <person name="Moran Y."/>
            <person name="Fry B.G."/>
        </authorList>
    </citation>
    <scope>FUNCTION</scope>
</reference>
<reference key="3">
    <citation type="journal article" date="2024" name="Toxins">
        <title>Evolutionary analysis of cnidaria small cysteine-rich proteins (scrips), an enigmatic neurotoxin family from stony corals and sea anemones (Anthozoa: Hexacorallia).</title>
        <authorList>
            <person name="Barroso R.A."/>
            <person name="Ramos L."/>
            <person name="Moreno H."/>
            <person name="Antunes A."/>
        </authorList>
    </citation>
    <scope>NOMENCLATURE</scope>
</reference>
<dbReference type="EMBL" id="BK006535">
    <property type="protein sequence ID" value="DAA06483.1"/>
    <property type="molecule type" value="mRNA"/>
</dbReference>
<dbReference type="OrthoDB" id="5977641at2759"/>
<dbReference type="GO" id="GO:0005576">
    <property type="term" value="C:extracellular region"/>
    <property type="evidence" value="ECO:0007669"/>
    <property type="project" value="UniProtKB-SubCell"/>
</dbReference>
<dbReference type="GO" id="GO:0042151">
    <property type="term" value="C:nematocyst"/>
    <property type="evidence" value="ECO:0007669"/>
    <property type="project" value="UniProtKB-SubCell"/>
</dbReference>
<dbReference type="GO" id="GO:0090729">
    <property type="term" value="F:toxin activity"/>
    <property type="evidence" value="ECO:0007669"/>
    <property type="project" value="UniProtKB-KW"/>
</dbReference>
<evidence type="ECO:0000255" key="1"/>
<evidence type="ECO:0000269" key="2">
    <source>
    </source>
</evidence>
<evidence type="ECO:0000303" key="3">
    <source>
    </source>
</evidence>
<evidence type="ECO:0000305" key="4"/>
<evidence type="ECO:0000305" key="5">
    <source>
    </source>
</evidence>
<evidence type="ECO:0000305" key="6">
    <source>
    </source>
</evidence>
<sequence length="79" mass="8907">MRSQHVLILLLGLVCASQVLGKHLTKVKAKALHYDKRGDCDWPTGVCFYIHDPCPPGLRRCPQHDDGCYLPTNHCCCYP</sequence>
<proteinExistence type="inferred from homology"/>
<keyword id="KW-0165">Cleavage on pair of basic residues</keyword>
<keyword id="KW-1015">Disulfide bond</keyword>
<keyword id="KW-0166">Nematocyst</keyword>
<keyword id="KW-0528">Neurotoxin</keyword>
<keyword id="KW-0964">Secreted</keyword>
<keyword id="KW-0732">Signal</keyword>
<keyword id="KW-0800">Toxin</keyword>
<comment type="function">
    <text evidence="2 5">This recombinant protein induces severe neurotoxicity on zebrafish larvae (Danio rerio) at a concentration of 230 mg/ml, but does not show toxicity when injected in blowfly larvae (Sarcophaga falculata). All fish incubated with this protein died within 200 minutes of exposure (PubMed:25757852). Has also been claimed to be implied in calcification, but this function seems improbable (PubMed:19283069, PubMed:25757852).</text>
</comment>
<comment type="subcellular location">
    <subcellularLocation>
        <location>Secreted</location>
    </subcellularLocation>
    <subcellularLocation>
        <location evidence="4">Nematocyst</location>
    </subcellularLocation>
</comment>
<comment type="PTM">
    <text evidence="4">Contains 4 disulfide bonds.</text>
</comment>
<comment type="similarity">
    <text evidence="6">Belongs to the Cnidaria small cysteine-rich protein (SCRiP) family. delta subfamily.</text>
</comment>
<organism>
    <name type="scientific">Acropora millepora</name>
    <name type="common">Staghorn coral</name>
    <name type="synonym">Heteropora millepora</name>
    <dbReference type="NCBI Taxonomy" id="45264"/>
    <lineage>
        <taxon>Eukaryota</taxon>
        <taxon>Metazoa</taxon>
        <taxon>Cnidaria</taxon>
        <taxon>Anthozoa</taxon>
        <taxon>Hexacorallia</taxon>
        <taxon>Scleractinia</taxon>
        <taxon>Astrocoeniina</taxon>
        <taxon>Acroporidae</taxon>
        <taxon>Acropora</taxon>
    </lineage>
</organism>
<protein>
    <recommendedName>
        <fullName evidence="3">Small cysteine-rich protein 2</fullName>
        <shortName evidence="3">Amil-SCRiP2</shortName>
        <shortName evidence="3">SCRiP2</shortName>
    </recommendedName>
</protein>
<feature type="signal peptide" evidence="1">
    <location>
        <begin position="1"/>
        <end position="21"/>
    </location>
</feature>
<feature type="propeptide" id="PRO_0000434297" evidence="4">
    <location>
        <begin position="22"/>
        <end position="35"/>
    </location>
</feature>
<feature type="chain" id="PRO_0000434298" description="Small cysteine-rich protein 2">
    <location>
        <begin position="38"/>
        <end position="79"/>
    </location>
</feature>
<accession>C0H691</accession>